<name>NQRA_ALISL</name>
<keyword id="KW-0406">Ion transport</keyword>
<keyword id="KW-0520">NAD</keyword>
<keyword id="KW-0915">Sodium</keyword>
<keyword id="KW-0739">Sodium transport</keyword>
<keyword id="KW-1278">Translocase</keyword>
<keyword id="KW-0813">Transport</keyword>
<keyword id="KW-0830">Ubiquinone</keyword>
<accession>B6EIC3</accession>
<evidence type="ECO:0000255" key="1">
    <source>
        <dbReference type="HAMAP-Rule" id="MF_00425"/>
    </source>
</evidence>
<organism>
    <name type="scientific">Aliivibrio salmonicida (strain LFI1238)</name>
    <name type="common">Vibrio salmonicida (strain LFI1238)</name>
    <dbReference type="NCBI Taxonomy" id="316275"/>
    <lineage>
        <taxon>Bacteria</taxon>
        <taxon>Pseudomonadati</taxon>
        <taxon>Pseudomonadota</taxon>
        <taxon>Gammaproteobacteria</taxon>
        <taxon>Vibrionales</taxon>
        <taxon>Vibrionaceae</taxon>
        <taxon>Aliivibrio</taxon>
    </lineage>
</organism>
<sequence>MITIKKGLDLPIAGVPTQVINDGNSITKVALLGEEYVGMRPTMHARVEDVVKKGQILFADKKNPGVIFTSPVSGKVVEINRGAKRVLQSVVIAVEGEEQVTFNSYAANQLASLDRDAIKQQLIDSGAWTALRTRPFSKVPAIDSETKAIFVTAMDTNPLAADAEVIINQQEDAFVAGLDLLSVLTGEKVYVCKKGGSLPRSSQGNVEEHVFDGPHPAGLAGTHMHYLYPVDLNNVAWSIGYQDVIAFGQLFLTGEIYSDRIVSLAGPAVNNPRLVRTITGASLLELTDSEVMPGEVRIISGSVLNGTQASGPHAYLGPYHQQVCVLREGREKEFLGWAVPGKNKFSVTRSFLSHVFSGQLFNMTTTTNGSDRAMVPIGSYERVMPLDMEPTMLLRDLCAGDVDSAARLGALELDEDDLGLCTYVCPGKYEYGPMLREILDTIEKEG</sequence>
<gene>
    <name evidence="1" type="primary">nqrA</name>
    <name type="ordered locus">VSAL_I0949</name>
</gene>
<comment type="function">
    <text evidence="1">NQR complex catalyzes the reduction of ubiquinone-1 to ubiquinol by two successive reactions, coupled with the transport of Na(+) ions from the cytoplasm to the periplasm. NqrA to NqrE are probably involved in the second step, the conversion of ubisemiquinone to ubiquinol.</text>
</comment>
<comment type="catalytic activity">
    <reaction evidence="1">
        <text>a ubiquinone + n Na(+)(in) + NADH + H(+) = a ubiquinol + n Na(+)(out) + NAD(+)</text>
        <dbReference type="Rhea" id="RHEA:47748"/>
        <dbReference type="Rhea" id="RHEA-COMP:9565"/>
        <dbReference type="Rhea" id="RHEA-COMP:9566"/>
        <dbReference type="ChEBI" id="CHEBI:15378"/>
        <dbReference type="ChEBI" id="CHEBI:16389"/>
        <dbReference type="ChEBI" id="CHEBI:17976"/>
        <dbReference type="ChEBI" id="CHEBI:29101"/>
        <dbReference type="ChEBI" id="CHEBI:57540"/>
        <dbReference type="ChEBI" id="CHEBI:57945"/>
        <dbReference type="EC" id="7.2.1.1"/>
    </reaction>
</comment>
<comment type="subunit">
    <text evidence="1">Composed of six subunits; NqrA, NqrB, NqrC, NqrD, NqrE and NqrF.</text>
</comment>
<comment type="similarity">
    <text evidence="1">Belongs to the NqrA family.</text>
</comment>
<reference key="1">
    <citation type="journal article" date="2008" name="BMC Genomics">
        <title>The genome sequence of the fish pathogen Aliivibrio salmonicida strain LFI1238 shows extensive evidence of gene decay.</title>
        <authorList>
            <person name="Hjerde E."/>
            <person name="Lorentzen M.S."/>
            <person name="Holden M.T."/>
            <person name="Seeger K."/>
            <person name="Paulsen S."/>
            <person name="Bason N."/>
            <person name="Churcher C."/>
            <person name="Harris D."/>
            <person name="Norbertczak H."/>
            <person name="Quail M.A."/>
            <person name="Sanders S."/>
            <person name="Thurston S."/>
            <person name="Parkhill J."/>
            <person name="Willassen N.P."/>
            <person name="Thomson N.R."/>
        </authorList>
    </citation>
    <scope>NUCLEOTIDE SEQUENCE [LARGE SCALE GENOMIC DNA]</scope>
    <source>
        <strain>LFI1238</strain>
    </source>
</reference>
<proteinExistence type="inferred from homology"/>
<feature type="chain" id="PRO_1000124167" description="Na(+)-translocating NADH-quinone reductase subunit A">
    <location>
        <begin position="1"/>
        <end position="446"/>
    </location>
</feature>
<dbReference type="EC" id="7.2.1.1" evidence="1"/>
<dbReference type="EMBL" id="FM178379">
    <property type="protein sequence ID" value="CAQ78634.1"/>
    <property type="molecule type" value="Genomic_DNA"/>
</dbReference>
<dbReference type="RefSeq" id="WP_012549719.1">
    <property type="nucleotide sequence ID" value="NC_011312.1"/>
</dbReference>
<dbReference type="SMR" id="B6EIC3"/>
<dbReference type="KEGG" id="vsa:VSAL_I0949"/>
<dbReference type="eggNOG" id="COG1726">
    <property type="taxonomic scope" value="Bacteria"/>
</dbReference>
<dbReference type="HOGENOM" id="CLU_046656_0_0_6"/>
<dbReference type="Proteomes" id="UP000001730">
    <property type="component" value="Chromosome 1"/>
</dbReference>
<dbReference type="GO" id="GO:0016655">
    <property type="term" value="F:oxidoreductase activity, acting on NAD(P)H, quinone or similar compound as acceptor"/>
    <property type="evidence" value="ECO:0007669"/>
    <property type="project" value="UniProtKB-UniRule"/>
</dbReference>
<dbReference type="GO" id="GO:0006814">
    <property type="term" value="P:sodium ion transport"/>
    <property type="evidence" value="ECO:0007669"/>
    <property type="project" value="UniProtKB-UniRule"/>
</dbReference>
<dbReference type="HAMAP" id="MF_00425">
    <property type="entry name" value="NqrA"/>
    <property type="match status" value="1"/>
</dbReference>
<dbReference type="InterPro" id="IPR008703">
    <property type="entry name" value="NqrA"/>
</dbReference>
<dbReference type="InterPro" id="IPR056148">
    <property type="entry name" value="NQRA_2nd"/>
</dbReference>
<dbReference type="InterPro" id="IPR022615">
    <property type="entry name" value="NqrA_C_domain"/>
</dbReference>
<dbReference type="InterPro" id="IPR056147">
    <property type="entry name" value="NQRA_N"/>
</dbReference>
<dbReference type="NCBIfam" id="TIGR01936">
    <property type="entry name" value="nqrA"/>
    <property type="match status" value="1"/>
</dbReference>
<dbReference type="NCBIfam" id="NF003759">
    <property type="entry name" value="PRK05352.1-2"/>
    <property type="match status" value="1"/>
</dbReference>
<dbReference type="PANTHER" id="PTHR37839">
    <property type="entry name" value="NA(+)-TRANSLOCATING NADH-QUINONE REDUCTASE SUBUNIT A"/>
    <property type="match status" value="1"/>
</dbReference>
<dbReference type="PANTHER" id="PTHR37839:SF1">
    <property type="entry name" value="NA(+)-TRANSLOCATING NADH-QUINONE REDUCTASE SUBUNIT A"/>
    <property type="match status" value="1"/>
</dbReference>
<dbReference type="Pfam" id="PF24836">
    <property type="entry name" value="NQRA_2nd"/>
    <property type="match status" value="1"/>
</dbReference>
<dbReference type="Pfam" id="PF05896">
    <property type="entry name" value="NQRA_N"/>
    <property type="match status" value="1"/>
</dbReference>
<dbReference type="Pfam" id="PF11973">
    <property type="entry name" value="NQRA_SLBB"/>
    <property type="match status" value="1"/>
</dbReference>
<protein>
    <recommendedName>
        <fullName evidence="1">Na(+)-translocating NADH-quinone reductase subunit A</fullName>
        <shortName evidence="1">Na(+)-NQR subunit A</shortName>
        <shortName evidence="1">Na(+)-translocating NQR subunit A</shortName>
        <ecNumber evidence="1">7.2.1.1</ecNumber>
    </recommendedName>
    <alternativeName>
        <fullName evidence="1">NQR complex subunit A</fullName>
    </alternativeName>
    <alternativeName>
        <fullName evidence="1">NQR-1 subunit A</fullName>
    </alternativeName>
</protein>